<feature type="chain" id="PRO_0000365243" description="DNA ligase">
    <location>
        <begin position="1"/>
        <end position="603"/>
    </location>
</feature>
<feature type="active site" description="N6-AMP-lysine intermediate" evidence="1">
    <location>
        <position position="264"/>
    </location>
</feature>
<feature type="binding site" evidence="1">
    <location>
        <position position="262"/>
    </location>
    <ligand>
        <name>ATP</name>
        <dbReference type="ChEBI" id="CHEBI:30616"/>
    </ligand>
</feature>
<feature type="binding site" evidence="1">
    <location>
        <position position="269"/>
    </location>
    <ligand>
        <name>ATP</name>
        <dbReference type="ChEBI" id="CHEBI:30616"/>
    </ligand>
</feature>
<feature type="binding site" evidence="1">
    <location>
        <position position="285"/>
    </location>
    <ligand>
        <name>ATP</name>
        <dbReference type="ChEBI" id="CHEBI:30616"/>
    </ligand>
</feature>
<feature type="binding site" evidence="1">
    <location>
        <position position="315"/>
    </location>
    <ligand>
        <name>ATP</name>
        <dbReference type="ChEBI" id="CHEBI:30616"/>
    </ligand>
</feature>
<feature type="binding site" evidence="1">
    <location>
        <position position="355"/>
    </location>
    <ligand>
        <name>ATP</name>
        <dbReference type="ChEBI" id="CHEBI:30616"/>
    </ligand>
</feature>
<feature type="binding site" evidence="1">
    <location>
        <position position="432"/>
    </location>
    <ligand>
        <name>ATP</name>
        <dbReference type="ChEBI" id="CHEBI:30616"/>
    </ligand>
</feature>
<feature type="binding site" evidence="1">
    <location>
        <position position="438"/>
    </location>
    <ligand>
        <name>ATP</name>
        <dbReference type="ChEBI" id="CHEBI:30616"/>
    </ligand>
</feature>
<evidence type="ECO:0000255" key="1">
    <source>
        <dbReference type="HAMAP-Rule" id="MF_00407"/>
    </source>
</evidence>
<proteinExistence type="inferred from homology"/>
<reference key="1">
    <citation type="submission" date="2007-10" db="EMBL/GenBank/DDBJ databases">
        <title>Complete sequence of Caldivirga maquilingensis IC-167.</title>
        <authorList>
            <consortium name="US DOE Joint Genome Institute"/>
            <person name="Copeland A."/>
            <person name="Lucas S."/>
            <person name="Lapidus A."/>
            <person name="Barry K."/>
            <person name="Glavina del Rio T."/>
            <person name="Dalin E."/>
            <person name="Tice H."/>
            <person name="Pitluck S."/>
            <person name="Saunders E."/>
            <person name="Brettin T."/>
            <person name="Bruce D."/>
            <person name="Detter J.C."/>
            <person name="Han C."/>
            <person name="Schmutz J."/>
            <person name="Larimer F."/>
            <person name="Land M."/>
            <person name="Hauser L."/>
            <person name="Kyrpides N."/>
            <person name="Ivanova N."/>
            <person name="Biddle J.F."/>
            <person name="Zhang Z."/>
            <person name="Fitz-Gibbon S.T."/>
            <person name="Lowe T.M."/>
            <person name="Saltikov C."/>
            <person name="House C.H."/>
            <person name="Richardson P."/>
        </authorList>
    </citation>
    <scope>NUCLEOTIDE SEQUENCE [LARGE SCALE GENOMIC DNA]</scope>
    <source>
        <strain>ATCC 700844 / DSM 13496 / JCM 10307 / IC-167</strain>
    </source>
</reference>
<comment type="function">
    <text evidence="1">DNA ligase that seals nicks in double-stranded DNA during DNA replication, DNA recombination and DNA repair.</text>
</comment>
<comment type="catalytic activity">
    <reaction evidence="1">
        <text>ATP + (deoxyribonucleotide)n-3'-hydroxyl + 5'-phospho-(deoxyribonucleotide)m = (deoxyribonucleotide)n+m + AMP + diphosphate.</text>
        <dbReference type="EC" id="6.5.1.1"/>
    </reaction>
</comment>
<comment type="cofactor">
    <cofactor evidence="1">
        <name>Mg(2+)</name>
        <dbReference type="ChEBI" id="CHEBI:18420"/>
    </cofactor>
</comment>
<comment type="similarity">
    <text evidence="1">Belongs to the ATP-dependent DNA ligase family.</text>
</comment>
<dbReference type="EC" id="6.5.1.1" evidence="1"/>
<dbReference type="EMBL" id="CP000852">
    <property type="protein sequence ID" value="ABW01952.1"/>
    <property type="molecule type" value="Genomic_DNA"/>
</dbReference>
<dbReference type="RefSeq" id="WP_012186171.1">
    <property type="nucleotide sequence ID" value="NC_009954.1"/>
</dbReference>
<dbReference type="SMR" id="A8MDU6"/>
<dbReference type="STRING" id="397948.Cmaq_1124"/>
<dbReference type="GeneID" id="5710004"/>
<dbReference type="KEGG" id="cma:Cmaq_1124"/>
<dbReference type="eggNOG" id="arCOG01347">
    <property type="taxonomic scope" value="Archaea"/>
</dbReference>
<dbReference type="HOGENOM" id="CLU_005138_6_0_2"/>
<dbReference type="OrthoDB" id="31274at2157"/>
<dbReference type="Proteomes" id="UP000001137">
    <property type="component" value="Chromosome"/>
</dbReference>
<dbReference type="GO" id="GO:0005524">
    <property type="term" value="F:ATP binding"/>
    <property type="evidence" value="ECO:0007669"/>
    <property type="project" value="UniProtKB-UniRule"/>
</dbReference>
<dbReference type="GO" id="GO:0003677">
    <property type="term" value="F:DNA binding"/>
    <property type="evidence" value="ECO:0007669"/>
    <property type="project" value="InterPro"/>
</dbReference>
<dbReference type="GO" id="GO:0003910">
    <property type="term" value="F:DNA ligase (ATP) activity"/>
    <property type="evidence" value="ECO:0007669"/>
    <property type="project" value="UniProtKB-UniRule"/>
</dbReference>
<dbReference type="GO" id="GO:0046872">
    <property type="term" value="F:metal ion binding"/>
    <property type="evidence" value="ECO:0007669"/>
    <property type="project" value="UniProtKB-KW"/>
</dbReference>
<dbReference type="GO" id="GO:0051301">
    <property type="term" value="P:cell division"/>
    <property type="evidence" value="ECO:0007669"/>
    <property type="project" value="UniProtKB-KW"/>
</dbReference>
<dbReference type="GO" id="GO:0071897">
    <property type="term" value="P:DNA biosynthetic process"/>
    <property type="evidence" value="ECO:0007669"/>
    <property type="project" value="InterPro"/>
</dbReference>
<dbReference type="GO" id="GO:0006310">
    <property type="term" value="P:DNA recombination"/>
    <property type="evidence" value="ECO:0007669"/>
    <property type="project" value="UniProtKB-UniRule"/>
</dbReference>
<dbReference type="GO" id="GO:0006281">
    <property type="term" value="P:DNA repair"/>
    <property type="evidence" value="ECO:0007669"/>
    <property type="project" value="UniProtKB-UniRule"/>
</dbReference>
<dbReference type="GO" id="GO:0006273">
    <property type="term" value="P:lagging strand elongation"/>
    <property type="evidence" value="ECO:0007669"/>
    <property type="project" value="TreeGrafter"/>
</dbReference>
<dbReference type="CDD" id="cd07901">
    <property type="entry name" value="Adenylation_DNA_ligase_Arch_LigB"/>
    <property type="match status" value="1"/>
</dbReference>
<dbReference type="CDD" id="cd07969">
    <property type="entry name" value="OBF_DNA_ligase_I"/>
    <property type="match status" value="1"/>
</dbReference>
<dbReference type="FunFam" id="1.10.3260.10:FF:000007">
    <property type="entry name" value="DNA ligase"/>
    <property type="match status" value="1"/>
</dbReference>
<dbReference type="FunFam" id="2.40.50.140:FF:000062">
    <property type="entry name" value="DNA ligase"/>
    <property type="match status" value="1"/>
</dbReference>
<dbReference type="FunFam" id="3.30.470.30:FF:000012">
    <property type="entry name" value="Probable DNA ligase"/>
    <property type="match status" value="1"/>
</dbReference>
<dbReference type="Gene3D" id="1.10.3260.10">
    <property type="entry name" value="DNA ligase, ATP-dependent, N-terminal domain"/>
    <property type="match status" value="1"/>
</dbReference>
<dbReference type="Gene3D" id="3.30.470.30">
    <property type="entry name" value="DNA ligase/mRNA capping enzyme"/>
    <property type="match status" value="1"/>
</dbReference>
<dbReference type="Gene3D" id="2.40.50.140">
    <property type="entry name" value="Nucleic acid-binding proteins"/>
    <property type="match status" value="1"/>
</dbReference>
<dbReference type="HAMAP" id="MF_00407">
    <property type="entry name" value="DNA_ligase"/>
    <property type="match status" value="1"/>
</dbReference>
<dbReference type="InterPro" id="IPR050191">
    <property type="entry name" value="ATP-dep_DNA_ligase"/>
</dbReference>
<dbReference type="InterPro" id="IPR022865">
    <property type="entry name" value="DNA_ligae_ATP-dep_bac/arc"/>
</dbReference>
<dbReference type="InterPro" id="IPR000977">
    <property type="entry name" value="DNA_ligase_ATP-dep"/>
</dbReference>
<dbReference type="InterPro" id="IPR012309">
    <property type="entry name" value="DNA_ligase_ATP-dep_C"/>
</dbReference>
<dbReference type="InterPro" id="IPR012310">
    <property type="entry name" value="DNA_ligase_ATP-dep_cent"/>
</dbReference>
<dbReference type="InterPro" id="IPR016059">
    <property type="entry name" value="DNA_ligase_ATP-dep_CS"/>
</dbReference>
<dbReference type="InterPro" id="IPR012308">
    <property type="entry name" value="DNA_ligase_ATP-dep_N"/>
</dbReference>
<dbReference type="InterPro" id="IPR036599">
    <property type="entry name" value="DNA_ligase_N_sf"/>
</dbReference>
<dbReference type="InterPro" id="IPR012340">
    <property type="entry name" value="NA-bd_OB-fold"/>
</dbReference>
<dbReference type="NCBIfam" id="TIGR00574">
    <property type="entry name" value="dnl1"/>
    <property type="match status" value="1"/>
</dbReference>
<dbReference type="PANTHER" id="PTHR45674:SF4">
    <property type="entry name" value="DNA LIGASE 1"/>
    <property type="match status" value="1"/>
</dbReference>
<dbReference type="PANTHER" id="PTHR45674">
    <property type="entry name" value="DNA LIGASE 1/3 FAMILY MEMBER"/>
    <property type="match status" value="1"/>
</dbReference>
<dbReference type="Pfam" id="PF04679">
    <property type="entry name" value="DNA_ligase_A_C"/>
    <property type="match status" value="1"/>
</dbReference>
<dbReference type="Pfam" id="PF01068">
    <property type="entry name" value="DNA_ligase_A_M"/>
    <property type="match status" value="1"/>
</dbReference>
<dbReference type="Pfam" id="PF04675">
    <property type="entry name" value="DNA_ligase_A_N"/>
    <property type="match status" value="1"/>
</dbReference>
<dbReference type="SUPFAM" id="SSF117018">
    <property type="entry name" value="ATP-dependent DNA ligase DNA-binding domain"/>
    <property type="match status" value="1"/>
</dbReference>
<dbReference type="SUPFAM" id="SSF56091">
    <property type="entry name" value="DNA ligase/mRNA capping enzyme, catalytic domain"/>
    <property type="match status" value="1"/>
</dbReference>
<dbReference type="SUPFAM" id="SSF50249">
    <property type="entry name" value="Nucleic acid-binding proteins"/>
    <property type="match status" value="1"/>
</dbReference>
<dbReference type="PROSITE" id="PS00697">
    <property type="entry name" value="DNA_LIGASE_A1"/>
    <property type="match status" value="1"/>
</dbReference>
<dbReference type="PROSITE" id="PS50160">
    <property type="entry name" value="DNA_LIGASE_A3"/>
    <property type="match status" value="1"/>
</dbReference>
<organism>
    <name type="scientific">Caldivirga maquilingensis (strain ATCC 700844 / DSM 13496 / JCM 10307 / IC-167)</name>
    <dbReference type="NCBI Taxonomy" id="397948"/>
    <lineage>
        <taxon>Archaea</taxon>
        <taxon>Thermoproteota</taxon>
        <taxon>Thermoprotei</taxon>
        <taxon>Thermoproteales</taxon>
        <taxon>Thermoproteaceae</taxon>
        <taxon>Caldivirga</taxon>
    </lineage>
</organism>
<keyword id="KW-0067">ATP-binding</keyword>
<keyword id="KW-0131">Cell cycle</keyword>
<keyword id="KW-0132">Cell division</keyword>
<keyword id="KW-0227">DNA damage</keyword>
<keyword id="KW-0233">DNA recombination</keyword>
<keyword id="KW-0234">DNA repair</keyword>
<keyword id="KW-0235">DNA replication</keyword>
<keyword id="KW-0436">Ligase</keyword>
<keyword id="KW-0460">Magnesium</keyword>
<keyword id="KW-0479">Metal-binding</keyword>
<keyword id="KW-0547">Nucleotide-binding</keyword>
<keyword id="KW-1185">Reference proteome</keyword>
<gene>
    <name evidence="1" type="primary">lig</name>
    <name type="ordered locus">Cmaq_1124</name>
</gene>
<protein>
    <recommendedName>
        <fullName evidence="1">DNA ligase</fullName>
        <ecNumber evidence="1">6.5.1.1</ecNumber>
    </recommendedName>
    <alternativeName>
        <fullName evidence="1">Polydeoxyribonucleotide synthase [ATP]</fullName>
    </alternativeName>
</protein>
<name>DNLI_CALMQ</name>
<sequence length="603" mass="67561">MESDLEFSNIVSVLKLVEATTQRTVMAKALSSLLAKTPPQVIDKVIYFLLGSLRPDWEGVELGLAERLTLRAISMATGLPIRQVEELYKKLGDAGEVAKRAAEIKRSKGGGGTIFDFIDTGPKRRLTISKVYDTLMAIAKASGEGAQDTKVKLLSSLLTDAEPDEAKYITRFVIGRLRLGVADMTILDALSDAFDVNRDLLEKAYHVYPDLGKIAKTLAEGGEEAVKAIKVTPGVPIQPMLAERLSSPKEILNKLGGVAICEFKYDGERMQIHKLKDGTVKIFSRRMEDITNQYPDVAEYAREAIDAEEFIVEGEGVAIDPDTGEFKPFQELMHRKRKHNIKEAIEEYPINLYLFDVMYVNGQDLTDLPLPDRKKVLFSIIKPHEHVHHADWIITDDADSLEKFFLDAISSGCEGVMCKSVKLGSVYEMGARGWLWIKYKRDYKSELSDTMDLVVVGAFWGRGKRAGTYGALLLAAYDPDSDQFYTVCKVGSGFTDEDLKKLPQMLEPYKIPHRHPRVVSKMEPDIWFTPGLVLEITGAEITMSPLHTCCSVMLKGDVGLAIRFPRFTGRYRTDKRPEDATTVKEIFEMYSNQKKVKLTDQVP</sequence>
<accession>A8MDU6</accession>